<accession>Q6CZW4</accession>
<protein>
    <recommendedName>
        <fullName evidence="1">Small ribosomal subunit protein uS7</fullName>
    </recommendedName>
    <alternativeName>
        <fullName evidence="2">30S ribosomal protein S7</fullName>
    </alternativeName>
</protein>
<gene>
    <name evidence="1" type="primary">rpsG</name>
    <name type="ordered locus">ECA4037</name>
</gene>
<name>RS7_PECAS</name>
<feature type="chain" id="PRO_0000124264" description="Small ribosomal subunit protein uS7">
    <location>
        <begin position="1"/>
        <end position="156"/>
    </location>
</feature>
<organism>
    <name type="scientific">Pectobacterium atrosepticum (strain SCRI 1043 / ATCC BAA-672)</name>
    <name type="common">Erwinia carotovora subsp. atroseptica</name>
    <dbReference type="NCBI Taxonomy" id="218491"/>
    <lineage>
        <taxon>Bacteria</taxon>
        <taxon>Pseudomonadati</taxon>
        <taxon>Pseudomonadota</taxon>
        <taxon>Gammaproteobacteria</taxon>
        <taxon>Enterobacterales</taxon>
        <taxon>Pectobacteriaceae</taxon>
        <taxon>Pectobacterium</taxon>
    </lineage>
</organism>
<proteinExistence type="inferred from homology"/>
<keyword id="KW-1185">Reference proteome</keyword>
<keyword id="KW-0687">Ribonucleoprotein</keyword>
<keyword id="KW-0689">Ribosomal protein</keyword>
<keyword id="KW-0694">RNA-binding</keyword>
<keyword id="KW-0699">rRNA-binding</keyword>
<keyword id="KW-0820">tRNA-binding</keyword>
<comment type="function">
    <text evidence="1">One of the primary rRNA binding proteins, it binds directly to 16S rRNA where it nucleates assembly of the head domain of the 30S subunit. Is located at the subunit interface close to the decoding center, probably blocks exit of the E-site tRNA.</text>
</comment>
<comment type="subunit">
    <text evidence="1">Part of the 30S ribosomal subunit. Contacts proteins S9 and S11.</text>
</comment>
<comment type="similarity">
    <text evidence="1">Belongs to the universal ribosomal protein uS7 family.</text>
</comment>
<evidence type="ECO:0000255" key="1">
    <source>
        <dbReference type="HAMAP-Rule" id="MF_00480"/>
    </source>
</evidence>
<evidence type="ECO:0000305" key="2"/>
<reference key="1">
    <citation type="journal article" date="2004" name="Proc. Natl. Acad. Sci. U.S.A.">
        <title>Genome sequence of the enterobacterial phytopathogen Erwinia carotovora subsp. atroseptica and characterization of virulence factors.</title>
        <authorList>
            <person name="Bell K.S."/>
            <person name="Sebaihia M."/>
            <person name="Pritchard L."/>
            <person name="Holden M.T.G."/>
            <person name="Hyman L.J."/>
            <person name="Holeva M.C."/>
            <person name="Thomson N.R."/>
            <person name="Bentley S.D."/>
            <person name="Churcher L.J.C."/>
            <person name="Mungall K."/>
            <person name="Atkin R."/>
            <person name="Bason N."/>
            <person name="Brooks K."/>
            <person name="Chillingworth T."/>
            <person name="Clark K."/>
            <person name="Doggett J."/>
            <person name="Fraser A."/>
            <person name="Hance Z."/>
            <person name="Hauser H."/>
            <person name="Jagels K."/>
            <person name="Moule S."/>
            <person name="Norbertczak H."/>
            <person name="Ormond D."/>
            <person name="Price C."/>
            <person name="Quail M.A."/>
            <person name="Sanders M."/>
            <person name="Walker D."/>
            <person name="Whitehead S."/>
            <person name="Salmond G.P.C."/>
            <person name="Birch P.R.J."/>
            <person name="Parkhill J."/>
            <person name="Toth I.K."/>
        </authorList>
    </citation>
    <scope>NUCLEOTIDE SEQUENCE [LARGE SCALE GENOMIC DNA]</scope>
    <source>
        <strain>SCRI 1043 / ATCC BAA-672</strain>
    </source>
</reference>
<sequence>MPRRRVIGQRKILPDPKFGSELLAKFVNILMVDGKKSTAEAIVYTALETLAQRSGKGHLEAFEVALDNVRPTVEVKSRRVGGSTYQVPVEVRPVRRNALAMRWIVEAARKRGDKSMALRLANELSDAAENKGTAVKKREDVHRMAEANKAFAHYRW</sequence>
<dbReference type="EMBL" id="BX950851">
    <property type="protein sequence ID" value="CAG76934.1"/>
    <property type="molecule type" value="Genomic_DNA"/>
</dbReference>
<dbReference type="RefSeq" id="WP_005969574.1">
    <property type="nucleotide sequence ID" value="NC_004547.2"/>
</dbReference>
<dbReference type="SMR" id="Q6CZW4"/>
<dbReference type="STRING" id="218491.ECA4037"/>
<dbReference type="GeneID" id="95418958"/>
<dbReference type="KEGG" id="eca:ECA4037"/>
<dbReference type="eggNOG" id="COG0049">
    <property type="taxonomic scope" value="Bacteria"/>
</dbReference>
<dbReference type="HOGENOM" id="CLU_072226_1_1_6"/>
<dbReference type="OrthoDB" id="9807653at2"/>
<dbReference type="Proteomes" id="UP000007966">
    <property type="component" value="Chromosome"/>
</dbReference>
<dbReference type="GO" id="GO:0015935">
    <property type="term" value="C:small ribosomal subunit"/>
    <property type="evidence" value="ECO:0007669"/>
    <property type="project" value="InterPro"/>
</dbReference>
<dbReference type="GO" id="GO:0019843">
    <property type="term" value="F:rRNA binding"/>
    <property type="evidence" value="ECO:0007669"/>
    <property type="project" value="UniProtKB-UniRule"/>
</dbReference>
<dbReference type="GO" id="GO:0003735">
    <property type="term" value="F:structural constituent of ribosome"/>
    <property type="evidence" value="ECO:0007669"/>
    <property type="project" value="InterPro"/>
</dbReference>
<dbReference type="GO" id="GO:0000049">
    <property type="term" value="F:tRNA binding"/>
    <property type="evidence" value="ECO:0007669"/>
    <property type="project" value="UniProtKB-UniRule"/>
</dbReference>
<dbReference type="GO" id="GO:0006412">
    <property type="term" value="P:translation"/>
    <property type="evidence" value="ECO:0007669"/>
    <property type="project" value="UniProtKB-UniRule"/>
</dbReference>
<dbReference type="CDD" id="cd14869">
    <property type="entry name" value="uS7_Bacteria"/>
    <property type="match status" value="1"/>
</dbReference>
<dbReference type="FunFam" id="1.10.455.10:FF:000001">
    <property type="entry name" value="30S ribosomal protein S7"/>
    <property type="match status" value="1"/>
</dbReference>
<dbReference type="Gene3D" id="1.10.455.10">
    <property type="entry name" value="Ribosomal protein S7 domain"/>
    <property type="match status" value="1"/>
</dbReference>
<dbReference type="HAMAP" id="MF_00480_B">
    <property type="entry name" value="Ribosomal_uS7_B"/>
    <property type="match status" value="1"/>
</dbReference>
<dbReference type="InterPro" id="IPR000235">
    <property type="entry name" value="Ribosomal_uS7"/>
</dbReference>
<dbReference type="InterPro" id="IPR005717">
    <property type="entry name" value="Ribosomal_uS7_bac/org-type"/>
</dbReference>
<dbReference type="InterPro" id="IPR020606">
    <property type="entry name" value="Ribosomal_uS7_CS"/>
</dbReference>
<dbReference type="InterPro" id="IPR023798">
    <property type="entry name" value="Ribosomal_uS7_dom"/>
</dbReference>
<dbReference type="InterPro" id="IPR036823">
    <property type="entry name" value="Ribosomal_uS7_dom_sf"/>
</dbReference>
<dbReference type="NCBIfam" id="TIGR01029">
    <property type="entry name" value="rpsG_bact"/>
    <property type="match status" value="1"/>
</dbReference>
<dbReference type="PANTHER" id="PTHR11205">
    <property type="entry name" value="RIBOSOMAL PROTEIN S7"/>
    <property type="match status" value="1"/>
</dbReference>
<dbReference type="Pfam" id="PF00177">
    <property type="entry name" value="Ribosomal_S7"/>
    <property type="match status" value="1"/>
</dbReference>
<dbReference type="PIRSF" id="PIRSF002122">
    <property type="entry name" value="RPS7p_RPS7a_RPS5e_RPS7o"/>
    <property type="match status" value="1"/>
</dbReference>
<dbReference type="SUPFAM" id="SSF47973">
    <property type="entry name" value="Ribosomal protein S7"/>
    <property type="match status" value="1"/>
</dbReference>
<dbReference type="PROSITE" id="PS00052">
    <property type="entry name" value="RIBOSOMAL_S7"/>
    <property type="match status" value="1"/>
</dbReference>